<name>UVRC_PASMU</name>
<protein>
    <recommendedName>
        <fullName evidence="1">UvrABC system protein C</fullName>
        <shortName evidence="1">Protein UvrC</shortName>
    </recommendedName>
    <alternativeName>
        <fullName evidence="1">Excinuclease ABC subunit C</fullName>
    </alternativeName>
</protein>
<proteinExistence type="inferred from homology"/>
<comment type="function">
    <text evidence="1">The UvrABC repair system catalyzes the recognition and processing of DNA lesions. UvrC both incises the 5' and 3' sides of the lesion. The N-terminal half is responsible for the 3' incision and the C-terminal half is responsible for the 5' incision.</text>
</comment>
<comment type="subunit">
    <text evidence="1">Interacts with UvrB in an incision complex.</text>
</comment>
<comment type="subcellular location">
    <subcellularLocation>
        <location evidence="1">Cytoplasm</location>
    </subcellularLocation>
</comment>
<comment type="similarity">
    <text evidence="1">Belongs to the UvrC family.</text>
</comment>
<comment type="sequence caution" evidence="2">
    <conflict type="erroneous initiation">
        <sequence resource="EMBL-CDS" id="AAK02941"/>
    </conflict>
</comment>
<reference key="1">
    <citation type="journal article" date="2001" name="Proc. Natl. Acad. Sci. U.S.A.">
        <title>Complete genomic sequence of Pasteurella multocida Pm70.</title>
        <authorList>
            <person name="May B.J."/>
            <person name="Zhang Q."/>
            <person name="Li L.L."/>
            <person name="Paustian M.L."/>
            <person name="Whittam T.S."/>
            <person name="Kapur V."/>
        </authorList>
    </citation>
    <scope>NUCLEOTIDE SEQUENCE [LARGE SCALE GENOMIC DNA]</scope>
    <source>
        <strain>Pm70</strain>
    </source>
</reference>
<dbReference type="EMBL" id="AE004439">
    <property type="protein sequence ID" value="AAK02941.1"/>
    <property type="status" value="ALT_INIT"/>
    <property type="molecule type" value="Genomic_DNA"/>
</dbReference>
<dbReference type="RefSeq" id="WP_032854373.1">
    <property type="nucleotide sequence ID" value="NC_002663.1"/>
</dbReference>
<dbReference type="SMR" id="P57882"/>
<dbReference type="STRING" id="272843.PM0857"/>
<dbReference type="EnsemblBacteria" id="AAK02941">
    <property type="protein sequence ID" value="AAK02941"/>
    <property type="gene ID" value="PM0857"/>
</dbReference>
<dbReference type="KEGG" id="pmu:PM0857"/>
<dbReference type="PATRIC" id="fig|272843.6.peg.867"/>
<dbReference type="HOGENOM" id="CLU_014841_3_2_6"/>
<dbReference type="OrthoDB" id="9804933at2"/>
<dbReference type="Proteomes" id="UP000000809">
    <property type="component" value="Chromosome"/>
</dbReference>
<dbReference type="GO" id="GO:0005737">
    <property type="term" value="C:cytoplasm"/>
    <property type="evidence" value="ECO:0007669"/>
    <property type="project" value="UniProtKB-SubCell"/>
</dbReference>
<dbReference type="GO" id="GO:0009380">
    <property type="term" value="C:excinuclease repair complex"/>
    <property type="evidence" value="ECO:0007669"/>
    <property type="project" value="InterPro"/>
</dbReference>
<dbReference type="GO" id="GO:0003677">
    <property type="term" value="F:DNA binding"/>
    <property type="evidence" value="ECO:0007669"/>
    <property type="project" value="UniProtKB-UniRule"/>
</dbReference>
<dbReference type="GO" id="GO:0009381">
    <property type="term" value="F:excinuclease ABC activity"/>
    <property type="evidence" value="ECO:0007669"/>
    <property type="project" value="UniProtKB-UniRule"/>
</dbReference>
<dbReference type="GO" id="GO:0006289">
    <property type="term" value="P:nucleotide-excision repair"/>
    <property type="evidence" value="ECO:0007669"/>
    <property type="project" value="UniProtKB-UniRule"/>
</dbReference>
<dbReference type="GO" id="GO:0009432">
    <property type="term" value="P:SOS response"/>
    <property type="evidence" value="ECO:0007669"/>
    <property type="project" value="UniProtKB-UniRule"/>
</dbReference>
<dbReference type="CDD" id="cd10434">
    <property type="entry name" value="GIY-YIG_UvrC_Cho"/>
    <property type="match status" value="1"/>
</dbReference>
<dbReference type="FunFam" id="1.10.150.20:FF:000005">
    <property type="entry name" value="UvrABC system protein C"/>
    <property type="match status" value="1"/>
</dbReference>
<dbReference type="FunFam" id="3.30.420.340:FF:000001">
    <property type="entry name" value="UvrABC system protein C"/>
    <property type="match status" value="1"/>
</dbReference>
<dbReference type="FunFam" id="3.40.1440.10:FF:000001">
    <property type="entry name" value="UvrABC system protein C"/>
    <property type="match status" value="1"/>
</dbReference>
<dbReference type="FunFam" id="4.10.860.10:FF:000002">
    <property type="entry name" value="UvrABC system protein C"/>
    <property type="match status" value="1"/>
</dbReference>
<dbReference type="Gene3D" id="1.10.150.20">
    <property type="entry name" value="5' to 3' exonuclease, C-terminal subdomain"/>
    <property type="match status" value="1"/>
</dbReference>
<dbReference type="Gene3D" id="3.40.1440.10">
    <property type="entry name" value="GIY-YIG endonuclease"/>
    <property type="match status" value="1"/>
</dbReference>
<dbReference type="Gene3D" id="4.10.860.10">
    <property type="entry name" value="UVR domain"/>
    <property type="match status" value="1"/>
</dbReference>
<dbReference type="Gene3D" id="3.30.420.340">
    <property type="entry name" value="UvrC, RNAse H endonuclease domain"/>
    <property type="match status" value="1"/>
</dbReference>
<dbReference type="HAMAP" id="MF_00203">
    <property type="entry name" value="UvrC"/>
    <property type="match status" value="1"/>
</dbReference>
<dbReference type="InterPro" id="IPR000305">
    <property type="entry name" value="GIY-YIG_endonuc"/>
</dbReference>
<dbReference type="InterPro" id="IPR035901">
    <property type="entry name" value="GIY-YIG_endonuc_sf"/>
</dbReference>
<dbReference type="InterPro" id="IPR047296">
    <property type="entry name" value="GIY-YIG_UvrC_Cho"/>
</dbReference>
<dbReference type="InterPro" id="IPR003583">
    <property type="entry name" value="Hlx-hairpin-Hlx_DNA-bd_motif"/>
</dbReference>
<dbReference type="InterPro" id="IPR010994">
    <property type="entry name" value="RuvA_2-like"/>
</dbReference>
<dbReference type="InterPro" id="IPR001943">
    <property type="entry name" value="UVR_dom"/>
</dbReference>
<dbReference type="InterPro" id="IPR036876">
    <property type="entry name" value="UVR_dom_sf"/>
</dbReference>
<dbReference type="InterPro" id="IPR050066">
    <property type="entry name" value="UvrABC_protein_C"/>
</dbReference>
<dbReference type="InterPro" id="IPR004791">
    <property type="entry name" value="UvrC"/>
</dbReference>
<dbReference type="InterPro" id="IPR001162">
    <property type="entry name" value="UvrC_RNase_H_dom"/>
</dbReference>
<dbReference type="InterPro" id="IPR038476">
    <property type="entry name" value="UvrC_RNase_H_dom_sf"/>
</dbReference>
<dbReference type="NCBIfam" id="NF001824">
    <property type="entry name" value="PRK00558.1-5"/>
    <property type="match status" value="1"/>
</dbReference>
<dbReference type="NCBIfam" id="TIGR00194">
    <property type="entry name" value="uvrC"/>
    <property type="match status" value="1"/>
</dbReference>
<dbReference type="PANTHER" id="PTHR30562:SF1">
    <property type="entry name" value="UVRABC SYSTEM PROTEIN C"/>
    <property type="match status" value="1"/>
</dbReference>
<dbReference type="PANTHER" id="PTHR30562">
    <property type="entry name" value="UVRC/OXIDOREDUCTASE"/>
    <property type="match status" value="1"/>
</dbReference>
<dbReference type="Pfam" id="PF01541">
    <property type="entry name" value="GIY-YIG"/>
    <property type="match status" value="1"/>
</dbReference>
<dbReference type="Pfam" id="PF14520">
    <property type="entry name" value="HHH_5"/>
    <property type="match status" value="1"/>
</dbReference>
<dbReference type="Pfam" id="PF02151">
    <property type="entry name" value="UVR"/>
    <property type="match status" value="1"/>
</dbReference>
<dbReference type="Pfam" id="PF22920">
    <property type="entry name" value="UvrC_RNaseH"/>
    <property type="match status" value="1"/>
</dbReference>
<dbReference type="Pfam" id="PF08459">
    <property type="entry name" value="UvrC_RNaseH_dom"/>
    <property type="match status" value="1"/>
</dbReference>
<dbReference type="SMART" id="SM00465">
    <property type="entry name" value="GIYc"/>
    <property type="match status" value="1"/>
</dbReference>
<dbReference type="SMART" id="SM00278">
    <property type="entry name" value="HhH1"/>
    <property type="match status" value="2"/>
</dbReference>
<dbReference type="SUPFAM" id="SSF46600">
    <property type="entry name" value="C-terminal UvrC-binding domain of UvrB"/>
    <property type="match status" value="1"/>
</dbReference>
<dbReference type="SUPFAM" id="SSF82771">
    <property type="entry name" value="GIY-YIG endonuclease"/>
    <property type="match status" value="1"/>
</dbReference>
<dbReference type="SUPFAM" id="SSF47781">
    <property type="entry name" value="RuvA domain 2-like"/>
    <property type="match status" value="1"/>
</dbReference>
<dbReference type="PROSITE" id="PS50164">
    <property type="entry name" value="GIY_YIG"/>
    <property type="match status" value="1"/>
</dbReference>
<dbReference type="PROSITE" id="PS50151">
    <property type="entry name" value="UVR"/>
    <property type="match status" value="1"/>
</dbReference>
<dbReference type="PROSITE" id="PS50165">
    <property type="entry name" value="UVRC"/>
    <property type="match status" value="1"/>
</dbReference>
<sequence>MFDAKSFLANVSHDAGVYRMYDEKDTVIYVGKAKDLKKRLSSYFRTHLSSKKTEALVSAIARIDTTITSSETEALLLEHNYIKTYQPRYNVLLRDDKSYPYILLTAERHPRISAYRGSKKIKGEYFGPYPHASAVRETLSLLQKLFPIRQCENAVYNNRSRPCLQYQIGRCAAPCVAGYVTDEAYLQQVELARLFLQGKDQQVLEHLIHKMEQASLALDFEEAARIRDQIQAVRAVMEKQFVSTERLDDMDILSIAYQLGIACVQVLFIRQGKMLGNRSYFPKVPANTTLSELTATFVGQFYLQAHQGRSIPHRIIVDHKLSEKTELEELLTQQAGRKVHIQDNTKGEKSKYLQLAKMNAQSALVTQLKQSTLLKERYQALQAILQLGEIRRMECFDISHTMGEQTIASCVVFNQDGPLKSDYRRFNITGITAGDDYAAMEQALLKRYDKPLEQEKIPDVIFIDGGKGQLNRALQTFSKLNVKWDKNQPHLIGVAKGIDRKAGLETLILSKQGKILHLPSDHLALHLIQHIRDESHQHAISGHRKKRQQAFLQSGLESVEGVGAKRRQTLLKYLGGMQGVKKATLDEIASVPGISKALAERIYDALRD</sequence>
<accession>P57882</accession>
<gene>
    <name evidence="1" type="primary">uvrC</name>
    <name type="ordered locus">PM0857</name>
</gene>
<keyword id="KW-0963">Cytoplasm</keyword>
<keyword id="KW-0227">DNA damage</keyword>
<keyword id="KW-0228">DNA excision</keyword>
<keyword id="KW-0234">DNA repair</keyword>
<keyword id="KW-0267">Excision nuclease</keyword>
<keyword id="KW-1185">Reference proteome</keyword>
<keyword id="KW-0742">SOS response</keyword>
<feature type="chain" id="PRO_0000138325" description="UvrABC system protein C">
    <location>
        <begin position="1"/>
        <end position="608"/>
    </location>
</feature>
<feature type="domain" description="GIY-YIG" evidence="1">
    <location>
        <begin position="13"/>
        <end position="91"/>
    </location>
</feature>
<feature type="domain" description="UVR" evidence="1">
    <location>
        <begin position="201"/>
        <end position="236"/>
    </location>
</feature>
<evidence type="ECO:0000255" key="1">
    <source>
        <dbReference type="HAMAP-Rule" id="MF_00203"/>
    </source>
</evidence>
<evidence type="ECO:0000305" key="2"/>
<organism>
    <name type="scientific">Pasteurella multocida (strain Pm70)</name>
    <dbReference type="NCBI Taxonomy" id="272843"/>
    <lineage>
        <taxon>Bacteria</taxon>
        <taxon>Pseudomonadati</taxon>
        <taxon>Pseudomonadota</taxon>
        <taxon>Gammaproteobacteria</taxon>
        <taxon>Pasteurellales</taxon>
        <taxon>Pasteurellaceae</taxon>
        <taxon>Pasteurella</taxon>
    </lineage>
</organism>